<reference key="1">
    <citation type="submission" date="1998-05" db="EMBL/GenBank/DDBJ databases">
        <title>Mouse homolog of human ciliary neurotrophic factor receptor.</title>
        <authorList>
            <person name="Maeda M."/>
            <person name="Yaguchi N."/>
            <person name="Hanyuu C."/>
            <person name="Nakata Y."/>
            <person name="Onoda N."/>
            <person name="Tulin E.E."/>
            <person name="Kojima T."/>
            <person name="Hasegawa M."/>
            <person name="Kikuchi Y."/>
            <person name="Nomura H."/>
        </authorList>
    </citation>
    <scope>NUCLEOTIDE SEQUENCE [MRNA]</scope>
    <source>
        <tissue>Brain</tissue>
    </source>
</reference>
<reference key="2">
    <citation type="journal article" date="2004" name="Genome Res.">
        <title>The status, quality, and expansion of the NIH full-length cDNA project: the Mammalian Gene Collection (MGC).</title>
        <authorList>
            <consortium name="The MGC Project Team"/>
        </authorList>
    </citation>
    <scope>NUCLEOTIDE SEQUENCE [LARGE SCALE MRNA]</scope>
    <source>
        <strain>C57BL/6J</strain>
        <tissue>Brain</tissue>
        <tissue>Olfactory epithelium</tissue>
    </source>
</reference>
<reference key="3">
    <citation type="journal article" date="2009" name="Nat. Biotechnol.">
        <title>Mass-spectrometric identification and relative quantification of N-linked cell surface glycoproteins.</title>
        <authorList>
            <person name="Wollscheid B."/>
            <person name="Bausch-Fluck D."/>
            <person name="Henderson C."/>
            <person name="O'Brien R."/>
            <person name="Bibel M."/>
            <person name="Schiess R."/>
            <person name="Aebersold R."/>
            <person name="Watts J.D."/>
        </authorList>
    </citation>
    <scope>GLYCOSYLATION [LARGE SCALE ANALYSIS] AT ASN-60 AND ASN-70</scope>
</reference>
<reference key="4">
    <citation type="journal article" date="2010" name="Cell">
        <title>A tissue-specific atlas of mouse protein phosphorylation and expression.</title>
        <authorList>
            <person name="Huttlin E.L."/>
            <person name="Jedrychowski M.P."/>
            <person name="Elias J.E."/>
            <person name="Goswami T."/>
            <person name="Rad R."/>
            <person name="Beausoleil S.A."/>
            <person name="Villen J."/>
            <person name="Haas W."/>
            <person name="Sowa M.E."/>
            <person name="Gygi S.P."/>
        </authorList>
    </citation>
    <scope>IDENTIFICATION BY MASS SPECTROMETRY [LARGE SCALE ANALYSIS]</scope>
    <source>
        <tissue>Brain</tissue>
        <tissue>Brown adipose tissue</tissue>
    </source>
</reference>
<gene>
    <name type="primary">Cntfr</name>
</gene>
<accession>O88507</accession>
<accession>Q80T01</accession>
<evidence type="ECO:0000250" key="1"/>
<evidence type="ECO:0000250" key="2">
    <source>
        <dbReference type="UniProtKB" id="P26992"/>
    </source>
</evidence>
<evidence type="ECO:0000255" key="3"/>
<evidence type="ECO:0000255" key="4">
    <source>
        <dbReference type="PROSITE-ProRule" id="PRU00114"/>
    </source>
</evidence>
<evidence type="ECO:0000255" key="5">
    <source>
        <dbReference type="PROSITE-ProRule" id="PRU00316"/>
    </source>
</evidence>
<evidence type="ECO:0000256" key="6">
    <source>
        <dbReference type="SAM" id="MobiDB-lite"/>
    </source>
</evidence>
<evidence type="ECO:0000269" key="7">
    <source>
    </source>
</evidence>
<evidence type="ECO:0000305" key="8"/>
<dbReference type="EMBL" id="AF068615">
    <property type="protein sequence ID" value="AAC25711.1"/>
    <property type="molecule type" value="mRNA"/>
</dbReference>
<dbReference type="EMBL" id="BC046974">
    <property type="protein sequence ID" value="AAH46974.1"/>
    <property type="molecule type" value="mRNA"/>
</dbReference>
<dbReference type="EMBL" id="BC050928">
    <property type="protein sequence ID" value="AAH50928.1"/>
    <property type="molecule type" value="mRNA"/>
</dbReference>
<dbReference type="CCDS" id="CCDS18067.1"/>
<dbReference type="RefSeq" id="NP_001129528.1">
    <property type="nucleotide sequence ID" value="NM_001136056.4"/>
</dbReference>
<dbReference type="RefSeq" id="NP_001366140.1">
    <property type="nucleotide sequence ID" value="NM_001379211.1"/>
</dbReference>
<dbReference type="RefSeq" id="NP_001366141.1">
    <property type="nucleotide sequence ID" value="NM_001379212.1"/>
</dbReference>
<dbReference type="RefSeq" id="NP_001366142.1">
    <property type="nucleotide sequence ID" value="NM_001379213.1"/>
</dbReference>
<dbReference type="RefSeq" id="NP_001366143.1">
    <property type="nucleotide sequence ID" value="NM_001379214.1"/>
</dbReference>
<dbReference type="RefSeq" id="NP_001366144.1">
    <property type="nucleotide sequence ID" value="NM_001379215.1"/>
</dbReference>
<dbReference type="RefSeq" id="NP_001366145.1">
    <property type="nucleotide sequence ID" value="NM_001379216.1"/>
</dbReference>
<dbReference type="RefSeq" id="NP_001390675.1">
    <property type="nucleotide sequence ID" value="NM_001403746.1"/>
</dbReference>
<dbReference type="RefSeq" id="NP_001390676.1">
    <property type="nucleotide sequence ID" value="NM_001403747.1"/>
</dbReference>
<dbReference type="RefSeq" id="NP_057882.2">
    <property type="nucleotide sequence ID" value="NM_016673.3"/>
</dbReference>
<dbReference type="RefSeq" id="XP_006537660.1">
    <property type="nucleotide sequence ID" value="XM_006537597.3"/>
</dbReference>
<dbReference type="RefSeq" id="XP_006537661.1">
    <property type="nucleotide sequence ID" value="XM_006537598.2"/>
</dbReference>
<dbReference type="RefSeq" id="XP_006537662.1">
    <property type="nucleotide sequence ID" value="XM_006537599.3"/>
</dbReference>
<dbReference type="RefSeq" id="XP_011248218.1">
    <property type="nucleotide sequence ID" value="XM_011249916.2"/>
</dbReference>
<dbReference type="RefSeq" id="XP_011248219.1">
    <property type="nucleotide sequence ID" value="XM_011249917.2"/>
</dbReference>
<dbReference type="RefSeq" id="XP_017175430.1">
    <property type="nucleotide sequence ID" value="XM_017319941.1"/>
</dbReference>
<dbReference type="RefSeq" id="XP_017175431.1">
    <property type="nucleotide sequence ID" value="XM_017319942.1"/>
</dbReference>
<dbReference type="RefSeq" id="XP_030109011.1">
    <property type="nucleotide sequence ID" value="XM_030253151.1"/>
</dbReference>
<dbReference type="BMRB" id="O88507"/>
<dbReference type="SMR" id="O88507"/>
<dbReference type="BioGRID" id="198796">
    <property type="interactions" value="2"/>
</dbReference>
<dbReference type="FunCoup" id="O88507">
    <property type="interactions" value="494"/>
</dbReference>
<dbReference type="IntAct" id="O88507">
    <property type="interactions" value="3"/>
</dbReference>
<dbReference type="MINT" id="O88507"/>
<dbReference type="STRING" id="10090.ENSMUSP00000100026"/>
<dbReference type="GlyConnect" id="2215">
    <property type="glycosylation" value="5 N-Linked glycans (2 sites)"/>
</dbReference>
<dbReference type="GlyCosmos" id="O88507">
    <property type="glycosylation" value="4 sites, 5 glycans"/>
</dbReference>
<dbReference type="GlyGen" id="O88507">
    <property type="glycosylation" value="5 sites, 9 N-linked glycans (4 sites), 1 O-linked glycan (1 site)"/>
</dbReference>
<dbReference type="iPTMnet" id="O88507"/>
<dbReference type="PhosphoSitePlus" id="O88507"/>
<dbReference type="SwissPalm" id="O88507"/>
<dbReference type="PaxDb" id="10090-ENSMUSP00000100026"/>
<dbReference type="ProteomicsDB" id="283410"/>
<dbReference type="Antibodypedia" id="25488">
    <property type="antibodies" value="321 antibodies from 38 providers"/>
</dbReference>
<dbReference type="DNASU" id="12804"/>
<dbReference type="Ensembl" id="ENSMUST00000102961.10">
    <property type="protein sequence ID" value="ENSMUSP00000100026.4"/>
    <property type="gene ID" value="ENSMUSG00000028444.18"/>
</dbReference>
<dbReference type="Ensembl" id="ENSMUST00000102962.10">
    <property type="protein sequence ID" value="ENSMUSP00000100027.4"/>
    <property type="gene ID" value="ENSMUSG00000028444.18"/>
</dbReference>
<dbReference type="GeneID" id="12804"/>
<dbReference type="KEGG" id="mmu:12804"/>
<dbReference type="UCSC" id="uc008sje.2">
    <property type="organism name" value="mouse"/>
</dbReference>
<dbReference type="AGR" id="MGI:99605"/>
<dbReference type="CTD" id="1271"/>
<dbReference type="MGI" id="MGI:99605">
    <property type="gene designation" value="Cntfr"/>
</dbReference>
<dbReference type="VEuPathDB" id="HostDB:ENSMUSG00000028444"/>
<dbReference type="eggNOG" id="ENOG502QUDK">
    <property type="taxonomic scope" value="Eukaryota"/>
</dbReference>
<dbReference type="GeneTree" id="ENSGT00940000158864"/>
<dbReference type="HOGENOM" id="CLU_047259_0_0_1"/>
<dbReference type="InParanoid" id="O88507"/>
<dbReference type="OMA" id="KICDTGE"/>
<dbReference type="OrthoDB" id="9927622at2759"/>
<dbReference type="PhylomeDB" id="O88507"/>
<dbReference type="TreeFam" id="TF331210"/>
<dbReference type="Reactome" id="R-MMU-6788467">
    <property type="pathway name" value="IL-6-type cytokine receptor ligand interactions"/>
</dbReference>
<dbReference type="SABIO-RK" id="O88507"/>
<dbReference type="BioGRID-ORCS" id="12804">
    <property type="hits" value="1 hit in 78 CRISPR screens"/>
</dbReference>
<dbReference type="ChiTaRS" id="Cntfr">
    <property type="organism name" value="mouse"/>
</dbReference>
<dbReference type="PRO" id="PR:O88507"/>
<dbReference type="Proteomes" id="UP000000589">
    <property type="component" value="Chromosome 4"/>
</dbReference>
<dbReference type="RNAct" id="O88507">
    <property type="molecule type" value="protein"/>
</dbReference>
<dbReference type="Bgee" id="ENSMUSG00000028444">
    <property type="expression patterns" value="Expressed in ventricular zone and 165 other cell types or tissues"/>
</dbReference>
<dbReference type="ExpressionAtlas" id="O88507">
    <property type="expression patterns" value="baseline and differential"/>
</dbReference>
<dbReference type="GO" id="GO:0016324">
    <property type="term" value="C:apical plasma membrane"/>
    <property type="evidence" value="ECO:0007669"/>
    <property type="project" value="Ensembl"/>
</dbReference>
<dbReference type="GO" id="GO:0070110">
    <property type="term" value="C:ciliary neurotrophic factor receptor complex"/>
    <property type="evidence" value="ECO:0007669"/>
    <property type="project" value="Ensembl"/>
</dbReference>
<dbReference type="GO" id="GO:0097059">
    <property type="term" value="C:CNTFR-CLCF1 complex"/>
    <property type="evidence" value="ECO:0007669"/>
    <property type="project" value="Ensembl"/>
</dbReference>
<dbReference type="GO" id="GO:0098552">
    <property type="term" value="C:side of membrane"/>
    <property type="evidence" value="ECO:0007669"/>
    <property type="project" value="UniProtKB-KW"/>
</dbReference>
<dbReference type="GO" id="GO:0004897">
    <property type="term" value="F:ciliary neurotrophic factor receptor activity"/>
    <property type="evidence" value="ECO:0000316"/>
    <property type="project" value="MGI"/>
</dbReference>
<dbReference type="GO" id="GO:0019955">
    <property type="term" value="F:cytokine binding"/>
    <property type="evidence" value="ECO:0007669"/>
    <property type="project" value="Ensembl"/>
</dbReference>
<dbReference type="GO" id="GO:0005102">
    <property type="term" value="F:signaling receptor binding"/>
    <property type="evidence" value="ECO:0007669"/>
    <property type="project" value="Ensembl"/>
</dbReference>
<dbReference type="GO" id="GO:0003360">
    <property type="term" value="P:brainstem development"/>
    <property type="evidence" value="ECO:0000315"/>
    <property type="project" value="MGI"/>
</dbReference>
<dbReference type="GO" id="GO:0070120">
    <property type="term" value="P:ciliary neurotrophic factor-mediated signaling pathway"/>
    <property type="evidence" value="ECO:0000316"/>
    <property type="project" value="MGI"/>
</dbReference>
<dbReference type="GO" id="GO:0097049">
    <property type="term" value="P:motor neuron apoptotic process"/>
    <property type="evidence" value="ECO:0000315"/>
    <property type="project" value="MGI"/>
</dbReference>
<dbReference type="GO" id="GO:2000672">
    <property type="term" value="P:negative regulation of motor neuron apoptotic process"/>
    <property type="evidence" value="ECO:0000315"/>
    <property type="project" value="MGI"/>
</dbReference>
<dbReference type="GO" id="GO:0008284">
    <property type="term" value="P:positive regulation of cell population proliferation"/>
    <property type="evidence" value="ECO:0000316"/>
    <property type="project" value="MGI"/>
</dbReference>
<dbReference type="GO" id="GO:0007548">
    <property type="term" value="P:sex differentiation"/>
    <property type="evidence" value="ECO:0000315"/>
    <property type="project" value="MGI"/>
</dbReference>
<dbReference type="GO" id="GO:0060538">
    <property type="term" value="P:skeletal muscle organ development"/>
    <property type="evidence" value="ECO:0000315"/>
    <property type="project" value="MGI"/>
</dbReference>
<dbReference type="GO" id="GO:0001967">
    <property type="term" value="P:suckling behavior"/>
    <property type="evidence" value="ECO:0000315"/>
    <property type="project" value="MGI"/>
</dbReference>
<dbReference type="CDD" id="cd00063">
    <property type="entry name" value="FN3"/>
    <property type="match status" value="1"/>
</dbReference>
<dbReference type="FunFam" id="2.60.40.10:FF:000136">
    <property type="entry name" value="Ciliary neurotrophic factor receptor alpha"/>
    <property type="match status" value="1"/>
</dbReference>
<dbReference type="FunFam" id="2.60.40.10:FF:000564">
    <property type="entry name" value="Ciliary neurotrophic factor receptor subunit alpha"/>
    <property type="match status" value="1"/>
</dbReference>
<dbReference type="FunFam" id="2.60.40.10:FF:000944">
    <property type="entry name" value="Ciliary neurotrophic factor receptor subunit alpha"/>
    <property type="match status" value="1"/>
</dbReference>
<dbReference type="Gene3D" id="2.60.40.10">
    <property type="entry name" value="Immunoglobulins"/>
    <property type="match status" value="3"/>
</dbReference>
<dbReference type="InterPro" id="IPR003961">
    <property type="entry name" value="FN3_dom"/>
</dbReference>
<dbReference type="InterPro" id="IPR036116">
    <property type="entry name" value="FN3_sf"/>
</dbReference>
<dbReference type="InterPro" id="IPR003530">
    <property type="entry name" value="Hematopoietin_rcpt_L_F3_CS"/>
</dbReference>
<dbReference type="InterPro" id="IPR007110">
    <property type="entry name" value="Ig-like_dom"/>
</dbReference>
<dbReference type="InterPro" id="IPR036179">
    <property type="entry name" value="Ig-like_dom_sf"/>
</dbReference>
<dbReference type="InterPro" id="IPR013783">
    <property type="entry name" value="Ig-like_fold"/>
</dbReference>
<dbReference type="InterPro" id="IPR003599">
    <property type="entry name" value="Ig_sub"/>
</dbReference>
<dbReference type="InterPro" id="IPR003598">
    <property type="entry name" value="Ig_sub2"/>
</dbReference>
<dbReference type="InterPro" id="IPR050379">
    <property type="entry name" value="Type-I_Cytokine_Rcpt"/>
</dbReference>
<dbReference type="PANTHER" id="PTHR23036:SF21">
    <property type="entry name" value="CILIARY NEUROTROPHIC FACTOR RECEPTOR SUBUNIT ALPHA"/>
    <property type="match status" value="1"/>
</dbReference>
<dbReference type="PANTHER" id="PTHR23036">
    <property type="entry name" value="CYTOKINE RECEPTOR"/>
    <property type="match status" value="1"/>
</dbReference>
<dbReference type="Pfam" id="PF00041">
    <property type="entry name" value="fn3"/>
    <property type="match status" value="1"/>
</dbReference>
<dbReference type="SMART" id="SM00060">
    <property type="entry name" value="FN3"/>
    <property type="match status" value="1"/>
</dbReference>
<dbReference type="SMART" id="SM00409">
    <property type="entry name" value="IG"/>
    <property type="match status" value="1"/>
</dbReference>
<dbReference type="SMART" id="SM00408">
    <property type="entry name" value="IGc2"/>
    <property type="match status" value="1"/>
</dbReference>
<dbReference type="SUPFAM" id="SSF49265">
    <property type="entry name" value="Fibronectin type III"/>
    <property type="match status" value="2"/>
</dbReference>
<dbReference type="SUPFAM" id="SSF48726">
    <property type="entry name" value="Immunoglobulin"/>
    <property type="match status" value="1"/>
</dbReference>
<dbReference type="PROSITE" id="PS50853">
    <property type="entry name" value="FN3"/>
    <property type="match status" value="2"/>
</dbReference>
<dbReference type="PROSITE" id="PS01354">
    <property type="entry name" value="HEMATOPO_REC_L_F3"/>
    <property type="match status" value="1"/>
</dbReference>
<dbReference type="PROSITE" id="PS50835">
    <property type="entry name" value="IG_LIKE"/>
    <property type="match status" value="1"/>
</dbReference>
<sequence length="372" mass="40801">MAASVPWACCAVLAAAAAAVYTQKHSPQEAPHVQYERLGADVTLPCGTASWDAAVTWRVNGTDLAPDLLNGSQLILRSLELGHSGLYACFHRDSWHLRHQVLLHVGLPPREPVLSCRSNTYPKGFYCSWHLPTPTYIPNTFNVTVLHGSKIMVCEKDPALKNRCHIRYMHLFSTIKYKVSISVSNALGHNTTAITFDEFTIVKPDPPENVVARPVPSNPRRLEVTWQTPSTWPDPESFPLKFFLRYRPLILDQWQHVELSDGTAHTITDAYAGKEYIIQVAAKDNEIGTWSDWSVAAHATPWTEEPRHLTTEAQAPETTTSTTSSLAPPPTTKICDPGELGSGGGPSILFLTSVPVTLVLAAAAATANNLLI</sequence>
<keyword id="KW-1003">Cell membrane</keyword>
<keyword id="KW-1015">Disulfide bond</keyword>
<keyword id="KW-0325">Glycoprotein</keyword>
<keyword id="KW-0336">GPI-anchor</keyword>
<keyword id="KW-0393">Immunoglobulin domain</keyword>
<keyword id="KW-0449">Lipoprotein</keyword>
<keyword id="KW-0472">Membrane</keyword>
<keyword id="KW-0675">Receptor</keyword>
<keyword id="KW-1185">Reference proteome</keyword>
<keyword id="KW-0677">Repeat</keyword>
<keyword id="KW-0732">Signal</keyword>
<name>CNTFR_MOUSE</name>
<protein>
    <recommendedName>
        <fullName>Ciliary neurotrophic factor receptor subunit alpha</fullName>
        <shortName>CNTF receptor subunit alpha</shortName>
        <shortName>CNTFR-alpha</shortName>
    </recommendedName>
</protein>
<feature type="signal peptide" evidence="3">
    <location>
        <begin position="1"/>
        <end position="22"/>
    </location>
</feature>
<feature type="chain" id="PRO_0000010993" description="Ciliary neurotrophic factor receptor subunit alpha">
    <location>
        <begin position="23"/>
        <end position="342"/>
    </location>
</feature>
<feature type="propeptide" id="PRO_0000010994" description="Removed in mature form" evidence="3">
    <location>
        <begin position="343"/>
        <end position="372"/>
    </location>
</feature>
<feature type="domain" description="Ig-like C2-type">
    <location>
        <begin position="27"/>
        <end position="104"/>
    </location>
</feature>
<feature type="domain" description="Fibronectin type-III 1" evidence="5">
    <location>
        <begin position="108"/>
        <end position="205"/>
    </location>
</feature>
<feature type="domain" description="Fibronectin type-III 2" evidence="5">
    <location>
        <begin position="206"/>
        <end position="306"/>
    </location>
</feature>
<feature type="region of interest" description="Disordered" evidence="6">
    <location>
        <begin position="301"/>
        <end position="338"/>
    </location>
</feature>
<feature type="short sequence motif" description="WSXWS motif">
    <location>
        <begin position="290"/>
        <end position="294"/>
    </location>
</feature>
<feature type="compositionally biased region" description="Low complexity" evidence="6">
    <location>
        <begin position="311"/>
        <end position="326"/>
    </location>
</feature>
<feature type="lipid moiety-binding region" description="GPI-anchor amidated serine" evidence="3">
    <location>
        <position position="342"/>
    </location>
</feature>
<feature type="glycosylation site" description="N-linked (GlcNAc...) asparagine" evidence="7">
    <location>
        <position position="60"/>
    </location>
</feature>
<feature type="glycosylation site" description="N-linked (GlcNAc...) asparagine" evidence="7">
    <location>
        <position position="70"/>
    </location>
</feature>
<feature type="glycosylation site" description="N-linked (GlcNAc...) asparagine" evidence="3">
    <location>
        <position position="142"/>
    </location>
</feature>
<feature type="glycosylation site" description="N-linked (GlcNAc...) asparagine" evidence="3">
    <location>
        <position position="190"/>
    </location>
</feature>
<feature type="disulfide bond" evidence="4">
    <location>
        <begin position="46"/>
        <end position="89"/>
    </location>
</feature>
<feature type="sequence conflict" description="In Ref. 1; AAC25711." evidence="8" ref="1">
    <original>A</original>
    <variation>T</variation>
    <location>
        <position position="2"/>
    </location>
</feature>
<organism>
    <name type="scientific">Mus musculus</name>
    <name type="common">Mouse</name>
    <dbReference type="NCBI Taxonomy" id="10090"/>
    <lineage>
        <taxon>Eukaryota</taxon>
        <taxon>Metazoa</taxon>
        <taxon>Chordata</taxon>
        <taxon>Craniata</taxon>
        <taxon>Vertebrata</taxon>
        <taxon>Euteleostomi</taxon>
        <taxon>Mammalia</taxon>
        <taxon>Eutheria</taxon>
        <taxon>Euarchontoglires</taxon>
        <taxon>Glires</taxon>
        <taxon>Rodentia</taxon>
        <taxon>Myomorpha</taxon>
        <taxon>Muroidea</taxon>
        <taxon>Muridae</taxon>
        <taxon>Murinae</taxon>
        <taxon>Mus</taxon>
        <taxon>Mus</taxon>
    </lineage>
</organism>
<comment type="function">
    <text evidence="1">Binds to CNTF. The alpha subunit provides the receptor specificity (By similarity).</text>
</comment>
<comment type="subunit">
    <text evidence="2">Forms a heterotrimer with LIFR and IL6ST. Interacts with heterodimeric neurotropic cytokine composed of CLCF1/CLC and CRLF1/CLF-1. Either alone or in complex with the heterodimer CLCF1-CRLF1 interacts with SORL1; this interaction may promote internalization and lysosomal degradation.</text>
</comment>
<comment type="subcellular location">
    <subcellularLocation>
        <location evidence="1">Cell membrane</location>
        <topology evidence="1">Lipid-anchor</topology>
        <topology evidence="1">GPI-anchor</topology>
    </subcellularLocation>
</comment>
<comment type="domain">
    <text evidence="1">The WSXWS motif appears to be necessary for proper protein folding and thereby efficient intracellular transport and cell-surface receptor binding.</text>
</comment>
<comment type="similarity">
    <text evidence="8">Belongs to the type I cytokine receptor family. Type 3 subfamily.</text>
</comment>
<proteinExistence type="evidence at protein level"/>